<keyword id="KW-0002">3D-structure</keyword>
<keyword id="KW-0064">Aspartyl protease</keyword>
<keyword id="KW-0903">Direct protein sequencing</keyword>
<keyword id="KW-1015">Disulfide bond</keyword>
<keyword id="KW-0325">Glycoprotein</keyword>
<keyword id="KW-0378">Hydrolase</keyword>
<keyword id="KW-0645">Protease</keyword>
<keyword id="KW-0732">Signal</keyword>
<keyword id="KW-0865">Zymogen</keyword>
<proteinExistence type="evidence at protein level"/>
<comment type="function">
    <text>This enzyme, capable of clotting milk is frequently used for cheese production.</text>
</comment>
<comment type="catalytic activity">
    <reaction>
        <text>Hydrolysis of proteins, favoring hydrophobic residues at P1 and P1'. Clots milk. Does not accept Lys at P1, and hence does not activate trypsinogen.</text>
        <dbReference type="EC" id="3.4.23.23"/>
    </reaction>
</comment>
<comment type="similarity">
    <text evidence="5">Belongs to the peptidase A1 family.</text>
</comment>
<reference key="1">
    <citation type="journal article" date="1986" name="Gene">
        <title>Primary structure of Mucor miehei aspartyl protease: evidence for a zymogen intermediate.</title>
        <authorList>
            <person name="Gray G.L."/>
            <person name="Hayenga K."/>
            <person name="Cullen D."/>
            <person name="Wilson L.J."/>
            <person name="Norton S."/>
        </authorList>
    </citation>
    <scope>NUCLEOTIDE SEQUENCE [MRNA]</scope>
</reference>
<reference key="2">
    <citation type="journal article" date="1986" name="Proteins">
        <title>Primary structure of a precursor to the aspartic proteinase from Rhizomucor miehei shows that the enzyme is synthesized as a zymogen.</title>
        <authorList>
            <person name="Boel E."/>
            <person name="Bech A.-M."/>
            <person name="Randrup K."/>
            <person name="Draeger B."/>
            <person name="Fiil N.P."/>
            <person name="Foltmann B."/>
        </authorList>
    </citation>
    <scope>NUCLEOTIDE SEQUENCE [GENOMIC DNA]</scope>
</reference>
<reference key="3">
    <citation type="journal article" date="1981" name="Neth. Milk Dairy J.">
        <title>Partial primary structure of Mucor miehei protease.</title>
        <authorList>
            <person name="Bech A.-M."/>
            <person name="Foltmann B."/>
        </authorList>
    </citation>
    <scope>PROTEIN SEQUENCE OF 70-430</scope>
</reference>
<reference key="4">
    <citation type="submission" date="1982-11" db="PIR data bank">
        <authorList>
            <person name="Foltmann B."/>
        </authorList>
    </citation>
    <scope>SEQUENCE REVISION</scope>
</reference>
<reference key="5">
    <citation type="journal article" date="1995" name="Acta Crystallogr. D">
        <title>Crystallization and preliminary X-ray structure solution of Rhizomucor miehei aspartic proteinase.</title>
        <authorList>
            <person name="Jia Z."/>
            <person name="Vandonselaar M."/>
            <person name="Schneider P."/>
            <person name="Quail J.W."/>
        </authorList>
    </citation>
    <scope>X-RAY CRYSTALLOGRAPHY (2.8 ANGSTROMS)</scope>
</reference>
<reference key="6">
    <citation type="journal article" date="1997" name="J. Mol. Biol.">
        <title>Crystal structure of the aspartic proteinase from Rhizomucor miehei at 2.15-A resolution.</title>
        <authorList>
            <person name="Yang J."/>
            <person name="Teplyakov A."/>
            <person name="Quail J.W."/>
        </authorList>
    </citation>
    <scope>X-RAY CRYSTALLOGRAPHY (2.15 ANGSTROMS)</scope>
</reference>
<sequence length="430" mass="46168">MLFSQITSAILLTAASLSLTTARPVSKQSESKDKLLALPLTSVSRKFSQTKFGQQQLAEKLAGLKPFSEAAADGSVDTPGYYDFDLEEYAIPVSIGTPGQDFLLLFDTGSSDTWVPHKGCTKSEGCVGSRFFDPSASSTFKATNYNLNITYGTGGANGLYFEDSIAIGDITVTKQILAYVDNVRGPTAEQSPNADIFLDGLFGAAYPDNTAMEAEYGSTYNTVHVNLYKQGLISSPLFSVYMNTNSGTGEVVFGGVNNTLLGGDIAYTDVMSRYGGYYFWDAPVTGITVDGSAAVRFSRPQAFTIDTGTNFFIMPSSAASKIVKAALPDATETQQGWVVPCASYQNSKSTISIVMQKSGSSSDTIEISVPVSKMLLPVDQSNETCMFIILPDGGNQYIVGNLFLRFFVNVYDFGNNRIGFAPLASAYENE</sequence>
<accession>P00799</accession>
<name>CARP_RHIMI</name>
<protein>
    <recommendedName>
        <fullName>Mucorpepsin</fullName>
        <ecNumber>3.4.23.23</ecNumber>
    </recommendedName>
    <alternativeName>
        <fullName>Mucor rennin</fullName>
    </alternativeName>
</protein>
<evidence type="ECO:0000255" key="1">
    <source>
        <dbReference type="PROSITE-ProRule" id="PRU01103"/>
    </source>
</evidence>
<evidence type="ECO:0000255" key="2">
    <source>
        <dbReference type="PROSITE-ProRule" id="PRU10094"/>
    </source>
</evidence>
<evidence type="ECO:0000269" key="3">
    <source>
    </source>
</evidence>
<evidence type="ECO:0000269" key="4">
    <source ref="3"/>
</evidence>
<evidence type="ECO:0000305" key="5"/>
<evidence type="ECO:0007829" key="6">
    <source>
        <dbReference type="PDB" id="2ASI"/>
    </source>
</evidence>
<evidence type="ECO:0007829" key="7">
    <source>
        <dbReference type="PDB" id="2RMP"/>
    </source>
</evidence>
<organism>
    <name type="scientific">Rhizomucor miehei</name>
    <dbReference type="NCBI Taxonomy" id="4839"/>
    <lineage>
        <taxon>Eukaryota</taxon>
        <taxon>Fungi</taxon>
        <taxon>Fungi incertae sedis</taxon>
        <taxon>Mucoromycota</taxon>
        <taxon>Mucoromycotina</taxon>
        <taxon>Mucoromycetes</taxon>
        <taxon>Mucorales</taxon>
        <taxon>Lichtheimiaceae</taxon>
        <taxon>Rhizomucor</taxon>
    </lineage>
</organism>
<dbReference type="EC" id="3.4.23.23"/>
<dbReference type="EMBL" id="M18411">
    <property type="protein sequence ID" value="AAA33423.1"/>
    <property type="molecule type" value="mRNA"/>
</dbReference>
<dbReference type="EMBL" id="M15267">
    <property type="protein sequence ID" value="AAA33421.1"/>
    <property type="molecule type" value="Genomic_DNA"/>
</dbReference>
<dbReference type="PIR" id="A29039">
    <property type="entry name" value="CMUMF"/>
</dbReference>
<dbReference type="PDB" id="2ASI">
    <property type="method" value="X-ray"/>
    <property type="resolution" value="2.15 A"/>
    <property type="chains" value="A=70-430"/>
</dbReference>
<dbReference type="PDB" id="2RMP">
    <property type="method" value="X-ray"/>
    <property type="resolution" value="2.70 A"/>
    <property type="chains" value="A=70-430"/>
</dbReference>
<dbReference type="PDBsum" id="2ASI"/>
<dbReference type="PDBsum" id="2RMP"/>
<dbReference type="SMR" id="P00799"/>
<dbReference type="Allergome" id="3880">
    <property type="allergen name" value="Rhi m AP"/>
</dbReference>
<dbReference type="MEROPS" id="A01.013"/>
<dbReference type="iPTMnet" id="P00799"/>
<dbReference type="EvolutionaryTrace" id="P00799"/>
<dbReference type="GO" id="GO:0004190">
    <property type="term" value="F:aspartic-type endopeptidase activity"/>
    <property type="evidence" value="ECO:0007669"/>
    <property type="project" value="UniProtKB-KW"/>
</dbReference>
<dbReference type="GO" id="GO:0006508">
    <property type="term" value="P:proteolysis"/>
    <property type="evidence" value="ECO:0007669"/>
    <property type="project" value="UniProtKB-KW"/>
</dbReference>
<dbReference type="CDD" id="cd05471">
    <property type="entry name" value="pepsin_like"/>
    <property type="match status" value="1"/>
</dbReference>
<dbReference type="FunFam" id="2.40.70.10:FF:000008">
    <property type="entry name" value="Cathepsin D"/>
    <property type="match status" value="1"/>
</dbReference>
<dbReference type="Gene3D" id="2.40.70.10">
    <property type="entry name" value="Acid Proteases"/>
    <property type="match status" value="2"/>
</dbReference>
<dbReference type="InterPro" id="IPR001461">
    <property type="entry name" value="Aspartic_peptidase_A1"/>
</dbReference>
<dbReference type="InterPro" id="IPR001969">
    <property type="entry name" value="Aspartic_peptidase_AS"/>
</dbReference>
<dbReference type="InterPro" id="IPR034164">
    <property type="entry name" value="Pepsin-like_dom"/>
</dbReference>
<dbReference type="InterPro" id="IPR033121">
    <property type="entry name" value="PEPTIDASE_A1"/>
</dbReference>
<dbReference type="InterPro" id="IPR021109">
    <property type="entry name" value="Peptidase_aspartic_dom_sf"/>
</dbReference>
<dbReference type="PANTHER" id="PTHR47966:SF1">
    <property type="entry name" value="ASPARTYL PROTEINASE"/>
    <property type="match status" value="1"/>
</dbReference>
<dbReference type="PANTHER" id="PTHR47966">
    <property type="entry name" value="BETA-SITE APP-CLEAVING ENZYME, ISOFORM A-RELATED"/>
    <property type="match status" value="1"/>
</dbReference>
<dbReference type="Pfam" id="PF00026">
    <property type="entry name" value="Asp"/>
    <property type="match status" value="1"/>
</dbReference>
<dbReference type="PRINTS" id="PR00792">
    <property type="entry name" value="PEPSIN"/>
</dbReference>
<dbReference type="SUPFAM" id="SSF50630">
    <property type="entry name" value="Acid proteases"/>
    <property type="match status" value="1"/>
</dbReference>
<dbReference type="PROSITE" id="PS00141">
    <property type="entry name" value="ASP_PROTEASE"/>
    <property type="match status" value="2"/>
</dbReference>
<dbReference type="PROSITE" id="PS51767">
    <property type="entry name" value="PEPTIDASE_A1"/>
    <property type="match status" value="1"/>
</dbReference>
<feature type="signal peptide">
    <location>
        <begin position="1"/>
        <end position="22"/>
    </location>
</feature>
<feature type="propeptide" id="PRO_0000025893" description="Activation peptide" evidence="4">
    <location>
        <begin position="23"/>
        <end position="69"/>
    </location>
</feature>
<feature type="chain" id="PRO_0000025894" description="Mucorpepsin" evidence="3">
    <location>
        <begin position="70"/>
        <end position="430"/>
    </location>
</feature>
<feature type="domain" description="Peptidase A1" evidence="1">
    <location>
        <begin position="89"/>
        <end position="421"/>
    </location>
</feature>
<feature type="active site" evidence="2">
    <location>
        <position position="107"/>
    </location>
</feature>
<feature type="active site" evidence="2">
    <location>
        <position position="306"/>
    </location>
</feature>
<feature type="glycosylation site" description="N-linked (GlcNAc...) asparagine" evidence="3">
    <location>
        <position position="148"/>
    </location>
</feature>
<feature type="glycosylation site" description="N-linked (GlcNAc...) asparagine" evidence="3">
    <location>
        <position position="257"/>
    </location>
</feature>
<feature type="disulfide bond" evidence="3">
    <location>
        <begin position="120"/>
        <end position="126"/>
    </location>
</feature>
<feature type="disulfide bond" evidence="3">
    <location>
        <begin position="341"/>
        <end position="385"/>
    </location>
</feature>
<feature type="sequence variant">
    <original>G</original>
    <variation>S</variation>
    <location>
        <position position="262"/>
    </location>
</feature>
<feature type="sequence conflict" description="In Ref. 3; AA sequence." evidence="5" ref="3">
    <original>A</original>
    <variation>T</variation>
    <location>
        <position position="136"/>
    </location>
</feature>
<feature type="sequence conflict" description="In Ref. 3; AA sequence." evidence="5" ref="3">
    <original>N</original>
    <variation>D</variation>
    <location>
        <position position="157"/>
    </location>
</feature>
<feature type="sequence conflict" description="In Ref. 3; AA sequence." evidence="5" ref="3">
    <location>
        <begin position="163"/>
        <end position="169"/>
    </location>
</feature>
<feature type="sequence conflict" description="In Ref. 3; AA sequence." evidence="5" ref="3">
    <location>
        <position position="252"/>
    </location>
</feature>
<feature type="sequence conflict" description="In Ref. 3; AA sequence." evidence="5" ref="3">
    <location>
        <position position="376"/>
    </location>
</feature>
<feature type="sequence conflict" description="In Ref. 3; AA sequence." evidence="5" ref="3">
    <original>D</original>
    <variation>N</variation>
    <location>
        <position position="392"/>
    </location>
</feature>
<feature type="sequence conflict" description="In Ref. 3; AA sequence." evidence="5" ref="3">
    <original>V</original>
    <variation>Y</variation>
    <location>
        <position position="399"/>
    </location>
</feature>
<feature type="sequence conflict" description="In Ref. 3; AA sequence." evidence="5" ref="3">
    <location>
        <position position="411"/>
    </location>
</feature>
<feature type="strand" evidence="6">
    <location>
        <begin position="76"/>
        <end position="82"/>
    </location>
</feature>
<feature type="turn" evidence="6">
    <location>
        <begin position="84"/>
        <end position="86"/>
    </location>
</feature>
<feature type="strand" evidence="6">
    <location>
        <begin position="89"/>
        <end position="95"/>
    </location>
</feature>
<feature type="turn" evidence="6">
    <location>
        <begin position="96"/>
        <end position="99"/>
    </location>
</feature>
<feature type="strand" evidence="6">
    <location>
        <begin position="100"/>
        <end position="107"/>
    </location>
</feature>
<feature type="strand" evidence="6">
    <location>
        <begin position="114"/>
        <end position="117"/>
    </location>
</feature>
<feature type="helix" evidence="6">
    <location>
        <begin position="122"/>
        <end position="124"/>
    </location>
</feature>
<feature type="helix" evidence="6">
    <location>
        <begin position="134"/>
        <end position="136"/>
    </location>
</feature>
<feature type="strand" evidence="6">
    <location>
        <begin position="141"/>
        <end position="149"/>
    </location>
</feature>
<feature type="strand" evidence="6">
    <location>
        <begin position="156"/>
        <end position="169"/>
    </location>
</feature>
<feature type="strand" evidence="6">
    <location>
        <begin position="171"/>
        <end position="183"/>
    </location>
</feature>
<feature type="helix" evidence="6">
    <location>
        <begin position="186"/>
        <end position="188"/>
    </location>
</feature>
<feature type="strand" evidence="6">
    <location>
        <begin position="194"/>
        <end position="196"/>
    </location>
</feature>
<feature type="strand" evidence="6">
    <location>
        <begin position="200"/>
        <end position="203"/>
    </location>
</feature>
<feature type="helix" evidence="6">
    <location>
        <begin position="207"/>
        <end position="209"/>
    </location>
</feature>
<feature type="helix" evidence="6">
    <location>
        <begin position="211"/>
        <end position="216"/>
    </location>
</feature>
<feature type="helix" evidence="6">
    <location>
        <begin position="223"/>
        <end position="229"/>
    </location>
</feature>
<feature type="strand" evidence="6">
    <location>
        <begin position="232"/>
        <end position="241"/>
    </location>
</feature>
<feature type="strand" evidence="6">
    <location>
        <begin position="244"/>
        <end position="254"/>
    </location>
</feature>
<feature type="helix" evidence="6">
    <location>
        <begin position="258"/>
        <end position="260"/>
    </location>
</feature>
<feature type="strand" evidence="6">
    <location>
        <begin position="261"/>
        <end position="263"/>
    </location>
</feature>
<feature type="strand" evidence="6">
    <location>
        <begin position="266"/>
        <end position="269"/>
    </location>
</feature>
<feature type="strand" evidence="6">
    <location>
        <begin position="281"/>
        <end position="289"/>
    </location>
</feature>
<feature type="strand" evidence="6">
    <location>
        <begin position="292"/>
        <end position="306"/>
    </location>
</feature>
<feature type="strand" evidence="6">
    <location>
        <begin position="311"/>
        <end position="313"/>
    </location>
</feature>
<feature type="turn" evidence="6">
    <location>
        <begin position="316"/>
        <end position="319"/>
    </location>
</feature>
<feature type="helix" evidence="6">
    <location>
        <begin position="322"/>
        <end position="326"/>
    </location>
</feature>
<feature type="strand" evidence="7">
    <location>
        <begin position="331"/>
        <end position="333"/>
    </location>
</feature>
<feature type="strand" evidence="6">
    <location>
        <begin position="334"/>
        <end position="336"/>
    </location>
</feature>
<feature type="strand" evidence="6">
    <location>
        <begin position="338"/>
        <end position="340"/>
    </location>
</feature>
<feature type="turn" evidence="6">
    <location>
        <begin position="341"/>
        <end position="345"/>
    </location>
</feature>
<feature type="strand" evidence="6">
    <location>
        <begin position="350"/>
        <end position="357"/>
    </location>
</feature>
<feature type="strand" evidence="6">
    <location>
        <begin position="364"/>
        <end position="371"/>
    </location>
</feature>
<feature type="helix" evidence="6">
    <location>
        <begin position="372"/>
        <end position="374"/>
    </location>
</feature>
<feature type="strand" evidence="6">
    <location>
        <begin position="375"/>
        <end position="392"/>
    </location>
</feature>
<feature type="strand" evidence="6">
    <location>
        <begin position="394"/>
        <end position="396"/>
    </location>
</feature>
<feature type="strand" evidence="6">
    <location>
        <begin position="398"/>
        <end position="400"/>
    </location>
</feature>
<feature type="helix" evidence="6">
    <location>
        <begin position="401"/>
        <end position="404"/>
    </location>
</feature>
<feature type="strand" evidence="6">
    <location>
        <begin position="407"/>
        <end position="412"/>
    </location>
</feature>
<feature type="turn" evidence="6">
    <location>
        <begin position="413"/>
        <end position="416"/>
    </location>
</feature>
<feature type="strand" evidence="6">
    <location>
        <begin position="417"/>
        <end position="423"/>
    </location>
</feature>
<feature type="helix" evidence="6">
    <location>
        <begin position="425"/>
        <end position="427"/>
    </location>
</feature>